<accession>Q9VB30</accession>
<sequence length="391" mass="45536">MEQMSGELHAASLLYMRRLMKCLGMLPFGQNLFSKGFCYVLLFVSLGFSSYWRFSFDYEFDYDFLNDRFSSTIDLSNFVALVLGHAIIVLELLWGNCSKDVDRQLQAIHSQIKLQLGTSNSTDRVRRYCNWIYGSLIIRWLIFIVVTIYSNRALTINATYSELVFLARFSEFTLYCAVILFIYQELIVGGSNVLDELYRTRYEMWSIRRLSLQKLAKLQAIHNSLWQAIRCLECYFQLSLITLLMKFFIDTSALPYWLYLSRVEHTRVAVQHYVATVECIKLLEIVVPCYLCTRCDAMQRKFLSMFYTVTTDRRSSQLNAALRSLNLQLSQEKYKFSAGGMVDINTEMLGKFFFGMISYIVICIQFSINFRAKKMSNEQMSQNITSTSAPI</sequence>
<evidence type="ECO:0000250" key="1"/>
<evidence type="ECO:0000255" key="2"/>
<evidence type="ECO:0000269" key="3">
    <source>
    </source>
</evidence>
<evidence type="ECO:0000305" key="4"/>
<evidence type="ECO:0000312" key="5">
    <source>
        <dbReference type="EMBL" id="AAF56713.2"/>
    </source>
</evidence>
<protein>
    <recommendedName>
        <fullName>Putative gustatory receptor 98a</fullName>
    </recommendedName>
</protein>
<name>GR98A_DROME</name>
<proteinExistence type="inferred from homology"/>
<keyword id="KW-1003">Cell membrane</keyword>
<keyword id="KW-0325">Glycoprotein</keyword>
<keyword id="KW-0472">Membrane</keyword>
<keyword id="KW-0675">Receptor</keyword>
<keyword id="KW-1185">Reference proteome</keyword>
<keyword id="KW-0807">Transducer</keyword>
<keyword id="KW-0812">Transmembrane</keyword>
<keyword id="KW-1133">Transmembrane helix</keyword>
<gene>
    <name type="primary">Gr98a</name>
    <name type="synonym">GR98B.4</name>
    <name type="ORF">CG13976</name>
</gene>
<reference evidence="4" key="1">
    <citation type="journal article" date="2000" name="Science">
        <title>The genome sequence of Drosophila melanogaster.</title>
        <authorList>
            <person name="Adams M.D."/>
            <person name="Celniker S.E."/>
            <person name="Holt R.A."/>
            <person name="Evans C.A."/>
            <person name="Gocayne J.D."/>
            <person name="Amanatides P.G."/>
            <person name="Scherer S.E."/>
            <person name="Li P.W."/>
            <person name="Hoskins R.A."/>
            <person name="Galle R.F."/>
            <person name="George R.A."/>
            <person name="Lewis S.E."/>
            <person name="Richards S."/>
            <person name="Ashburner M."/>
            <person name="Henderson S.N."/>
            <person name="Sutton G.G."/>
            <person name="Wortman J.R."/>
            <person name="Yandell M.D."/>
            <person name="Zhang Q."/>
            <person name="Chen L.X."/>
            <person name="Brandon R.C."/>
            <person name="Rogers Y.-H.C."/>
            <person name="Blazej R.G."/>
            <person name="Champe M."/>
            <person name="Pfeiffer B.D."/>
            <person name="Wan K.H."/>
            <person name="Doyle C."/>
            <person name="Baxter E.G."/>
            <person name="Helt G."/>
            <person name="Nelson C.R."/>
            <person name="Miklos G.L.G."/>
            <person name="Abril J.F."/>
            <person name="Agbayani A."/>
            <person name="An H.-J."/>
            <person name="Andrews-Pfannkoch C."/>
            <person name="Baldwin D."/>
            <person name="Ballew R.M."/>
            <person name="Basu A."/>
            <person name="Baxendale J."/>
            <person name="Bayraktaroglu L."/>
            <person name="Beasley E.M."/>
            <person name="Beeson K.Y."/>
            <person name="Benos P.V."/>
            <person name="Berman B.P."/>
            <person name="Bhandari D."/>
            <person name="Bolshakov S."/>
            <person name="Borkova D."/>
            <person name="Botchan M.R."/>
            <person name="Bouck J."/>
            <person name="Brokstein P."/>
            <person name="Brottier P."/>
            <person name="Burtis K.C."/>
            <person name="Busam D.A."/>
            <person name="Butler H."/>
            <person name="Cadieu E."/>
            <person name="Center A."/>
            <person name="Chandra I."/>
            <person name="Cherry J.M."/>
            <person name="Cawley S."/>
            <person name="Dahlke C."/>
            <person name="Davenport L.B."/>
            <person name="Davies P."/>
            <person name="de Pablos B."/>
            <person name="Delcher A."/>
            <person name="Deng Z."/>
            <person name="Mays A.D."/>
            <person name="Dew I."/>
            <person name="Dietz S.M."/>
            <person name="Dodson K."/>
            <person name="Doup L.E."/>
            <person name="Downes M."/>
            <person name="Dugan-Rocha S."/>
            <person name="Dunkov B.C."/>
            <person name="Dunn P."/>
            <person name="Durbin K.J."/>
            <person name="Evangelista C.C."/>
            <person name="Ferraz C."/>
            <person name="Ferriera S."/>
            <person name="Fleischmann W."/>
            <person name="Fosler C."/>
            <person name="Gabrielian A.E."/>
            <person name="Garg N.S."/>
            <person name="Gelbart W.M."/>
            <person name="Glasser K."/>
            <person name="Glodek A."/>
            <person name="Gong F."/>
            <person name="Gorrell J.H."/>
            <person name="Gu Z."/>
            <person name="Guan P."/>
            <person name="Harris M."/>
            <person name="Harris N.L."/>
            <person name="Harvey D.A."/>
            <person name="Heiman T.J."/>
            <person name="Hernandez J.R."/>
            <person name="Houck J."/>
            <person name="Hostin D."/>
            <person name="Houston K.A."/>
            <person name="Howland T.J."/>
            <person name="Wei M.-H."/>
            <person name="Ibegwam C."/>
            <person name="Jalali M."/>
            <person name="Kalush F."/>
            <person name="Karpen G.H."/>
            <person name="Ke Z."/>
            <person name="Kennison J.A."/>
            <person name="Ketchum K.A."/>
            <person name="Kimmel B.E."/>
            <person name="Kodira C.D."/>
            <person name="Kraft C.L."/>
            <person name="Kravitz S."/>
            <person name="Kulp D."/>
            <person name="Lai Z."/>
            <person name="Lasko P."/>
            <person name="Lei Y."/>
            <person name="Levitsky A.A."/>
            <person name="Li J.H."/>
            <person name="Li Z."/>
            <person name="Liang Y."/>
            <person name="Lin X."/>
            <person name="Liu X."/>
            <person name="Mattei B."/>
            <person name="McIntosh T.C."/>
            <person name="McLeod M.P."/>
            <person name="McPherson D."/>
            <person name="Merkulov G."/>
            <person name="Milshina N.V."/>
            <person name="Mobarry C."/>
            <person name="Morris J."/>
            <person name="Moshrefi A."/>
            <person name="Mount S.M."/>
            <person name="Moy M."/>
            <person name="Murphy B."/>
            <person name="Murphy L."/>
            <person name="Muzny D.M."/>
            <person name="Nelson D.L."/>
            <person name="Nelson D.R."/>
            <person name="Nelson K.A."/>
            <person name="Nixon K."/>
            <person name="Nusskern D.R."/>
            <person name="Pacleb J.M."/>
            <person name="Palazzolo M."/>
            <person name="Pittman G.S."/>
            <person name="Pan S."/>
            <person name="Pollard J."/>
            <person name="Puri V."/>
            <person name="Reese M.G."/>
            <person name="Reinert K."/>
            <person name="Remington K."/>
            <person name="Saunders R.D.C."/>
            <person name="Scheeler F."/>
            <person name="Shen H."/>
            <person name="Shue B.C."/>
            <person name="Siden-Kiamos I."/>
            <person name="Simpson M."/>
            <person name="Skupski M.P."/>
            <person name="Smith T.J."/>
            <person name="Spier E."/>
            <person name="Spradling A.C."/>
            <person name="Stapleton M."/>
            <person name="Strong R."/>
            <person name="Sun E."/>
            <person name="Svirskas R."/>
            <person name="Tector C."/>
            <person name="Turner R."/>
            <person name="Venter E."/>
            <person name="Wang A.H."/>
            <person name="Wang X."/>
            <person name="Wang Z.-Y."/>
            <person name="Wassarman D.A."/>
            <person name="Weinstock G.M."/>
            <person name="Weissenbach J."/>
            <person name="Williams S.M."/>
            <person name="Woodage T."/>
            <person name="Worley K.C."/>
            <person name="Wu D."/>
            <person name="Yang S."/>
            <person name="Yao Q.A."/>
            <person name="Ye J."/>
            <person name="Yeh R.-F."/>
            <person name="Zaveri J.S."/>
            <person name="Zhan M."/>
            <person name="Zhang G."/>
            <person name="Zhao Q."/>
            <person name="Zheng L."/>
            <person name="Zheng X.H."/>
            <person name="Zhong F.N."/>
            <person name="Zhong W."/>
            <person name="Zhou X."/>
            <person name="Zhu S.C."/>
            <person name="Zhu X."/>
            <person name="Smith H.O."/>
            <person name="Gibbs R.A."/>
            <person name="Myers E.W."/>
            <person name="Rubin G.M."/>
            <person name="Venter J.C."/>
        </authorList>
    </citation>
    <scope>NUCLEOTIDE SEQUENCE [LARGE SCALE GENOMIC DNA]</scope>
    <source>
        <strain evidence="3">Berkeley</strain>
    </source>
</reference>
<reference evidence="4" key="2">
    <citation type="journal article" date="2002" name="Genome Biol.">
        <title>Annotation of the Drosophila melanogaster euchromatic genome: a systematic review.</title>
        <authorList>
            <person name="Misra S."/>
            <person name="Crosby M.A."/>
            <person name="Mungall C.J."/>
            <person name="Matthews B.B."/>
            <person name="Campbell K.S."/>
            <person name="Hradecky P."/>
            <person name="Huang Y."/>
            <person name="Kaminker J.S."/>
            <person name="Millburn G.H."/>
            <person name="Prochnik S.E."/>
            <person name="Smith C.D."/>
            <person name="Tupy J.L."/>
            <person name="Whitfield E.J."/>
            <person name="Bayraktaroglu L."/>
            <person name="Berman B.P."/>
            <person name="Bettencourt B.R."/>
            <person name="Celniker S.E."/>
            <person name="de Grey A.D.N.J."/>
            <person name="Drysdale R.A."/>
            <person name="Harris N.L."/>
            <person name="Richter J."/>
            <person name="Russo S."/>
            <person name="Schroeder A.J."/>
            <person name="Shu S.Q."/>
            <person name="Stapleton M."/>
            <person name="Yamada C."/>
            <person name="Ashburner M."/>
            <person name="Gelbart W.M."/>
            <person name="Rubin G.M."/>
            <person name="Lewis S.E."/>
        </authorList>
    </citation>
    <scope>GENOME REANNOTATION</scope>
    <source>
        <strain>Berkeley</strain>
    </source>
</reference>
<reference evidence="4" key="3">
    <citation type="journal article" date="2000" name="Science">
        <title>Candidate taste receptors in Drosophila.</title>
        <authorList>
            <person name="Clyne P.J."/>
            <person name="Warr C.G."/>
            <person name="Carlson J.R."/>
        </authorList>
    </citation>
    <scope>IDENTIFICATION</scope>
</reference>
<dbReference type="EMBL" id="AE014297">
    <property type="protein sequence ID" value="AAF56713.2"/>
    <property type="molecule type" value="Genomic_DNA"/>
</dbReference>
<dbReference type="RefSeq" id="NP_651564.1">
    <property type="nucleotide sequence ID" value="NM_143307.2"/>
</dbReference>
<dbReference type="SMR" id="Q9VB30"/>
<dbReference type="FunCoup" id="Q9VB30">
    <property type="interactions" value="10"/>
</dbReference>
<dbReference type="STRING" id="7227.FBpp0084554"/>
<dbReference type="GlyCosmos" id="Q9VB30">
    <property type="glycosylation" value="2 sites, No reported glycans"/>
</dbReference>
<dbReference type="GlyGen" id="Q9VB30">
    <property type="glycosylation" value="2 sites"/>
</dbReference>
<dbReference type="PaxDb" id="7227-FBpp0084554"/>
<dbReference type="EnsemblMetazoa" id="FBtr0085184">
    <property type="protein sequence ID" value="FBpp0084554"/>
    <property type="gene ID" value="FBgn0039520"/>
</dbReference>
<dbReference type="GeneID" id="43305"/>
<dbReference type="KEGG" id="dme:Dmel_CG13976"/>
<dbReference type="AGR" id="FB:FBgn0039520"/>
<dbReference type="CTD" id="43305"/>
<dbReference type="FlyBase" id="FBgn0039520">
    <property type="gene designation" value="Gr98a"/>
</dbReference>
<dbReference type="VEuPathDB" id="VectorBase:FBgn0039520"/>
<dbReference type="eggNOG" id="ENOG502T6P4">
    <property type="taxonomic scope" value="Eukaryota"/>
</dbReference>
<dbReference type="HOGENOM" id="CLU_058302_0_0_1"/>
<dbReference type="InParanoid" id="Q9VB30"/>
<dbReference type="OMA" id="FAYISTE"/>
<dbReference type="OrthoDB" id="7862671at2759"/>
<dbReference type="PhylomeDB" id="Q9VB30"/>
<dbReference type="BioGRID-ORCS" id="43305">
    <property type="hits" value="0 hits in 1 CRISPR screen"/>
</dbReference>
<dbReference type="GenomeRNAi" id="43305"/>
<dbReference type="PRO" id="PR:Q9VB30"/>
<dbReference type="Proteomes" id="UP000000803">
    <property type="component" value="Chromosome 3R"/>
</dbReference>
<dbReference type="Bgee" id="FBgn0039520">
    <property type="expression patterns" value="Expressed in adult Malpighian tubule principal cell of lower segment in Malpighian tubule and 12 other cell types or tissues"/>
</dbReference>
<dbReference type="ExpressionAtlas" id="Q9VB30">
    <property type="expression patterns" value="baseline and differential"/>
</dbReference>
<dbReference type="GO" id="GO:0030424">
    <property type="term" value="C:axon"/>
    <property type="evidence" value="ECO:0000318"/>
    <property type="project" value="GO_Central"/>
</dbReference>
<dbReference type="GO" id="GO:0030425">
    <property type="term" value="C:dendrite"/>
    <property type="evidence" value="ECO:0000318"/>
    <property type="project" value="GO_Central"/>
</dbReference>
<dbReference type="GO" id="GO:0016020">
    <property type="term" value="C:membrane"/>
    <property type="evidence" value="ECO:0000303"/>
    <property type="project" value="UniProtKB"/>
</dbReference>
<dbReference type="GO" id="GO:0043025">
    <property type="term" value="C:neuronal cell body"/>
    <property type="evidence" value="ECO:0000318"/>
    <property type="project" value="GO_Central"/>
</dbReference>
<dbReference type="GO" id="GO:0005886">
    <property type="term" value="C:plasma membrane"/>
    <property type="evidence" value="ECO:0000250"/>
    <property type="project" value="FlyBase"/>
</dbReference>
<dbReference type="GO" id="GO:0015276">
    <property type="term" value="F:ligand-gated monoatomic ion channel activity"/>
    <property type="evidence" value="ECO:0000250"/>
    <property type="project" value="FlyBase"/>
</dbReference>
<dbReference type="GO" id="GO:0007635">
    <property type="term" value="P:chemosensory behavior"/>
    <property type="evidence" value="ECO:0000318"/>
    <property type="project" value="GO_Central"/>
</dbReference>
<dbReference type="GO" id="GO:0008049">
    <property type="term" value="P:male courtship behavior"/>
    <property type="evidence" value="ECO:0000318"/>
    <property type="project" value="GO_Central"/>
</dbReference>
<dbReference type="GO" id="GO:0034220">
    <property type="term" value="P:monoatomic ion transmembrane transport"/>
    <property type="evidence" value="ECO:0000250"/>
    <property type="project" value="FlyBase"/>
</dbReference>
<dbReference type="GO" id="GO:0050909">
    <property type="term" value="P:sensory perception of taste"/>
    <property type="evidence" value="ECO:0007669"/>
    <property type="project" value="InterPro"/>
</dbReference>
<dbReference type="GO" id="GO:0007165">
    <property type="term" value="P:signal transduction"/>
    <property type="evidence" value="ECO:0007669"/>
    <property type="project" value="UniProtKB-KW"/>
</dbReference>
<dbReference type="InterPro" id="IPR013604">
    <property type="entry name" value="7TM_chemorcpt"/>
</dbReference>
<dbReference type="PANTHER" id="PTHR21143:SF133">
    <property type="entry name" value="GUSTATORY AND PHEROMONE RECEPTOR 32A-RELATED"/>
    <property type="match status" value="1"/>
</dbReference>
<dbReference type="PANTHER" id="PTHR21143">
    <property type="entry name" value="INVERTEBRATE GUSTATORY RECEPTOR"/>
    <property type="match status" value="1"/>
</dbReference>
<dbReference type="Pfam" id="PF08395">
    <property type="entry name" value="7tm_7"/>
    <property type="match status" value="1"/>
</dbReference>
<organism evidence="5">
    <name type="scientific">Drosophila melanogaster</name>
    <name type="common">Fruit fly</name>
    <dbReference type="NCBI Taxonomy" id="7227"/>
    <lineage>
        <taxon>Eukaryota</taxon>
        <taxon>Metazoa</taxon>
        <taxon>Ecdysozoa</taxon>
        <taxon>Arthropoda</taxon>
        <taxon>Hexapoda</taxon>
        <taxon>Insecta</taxon>
        <taxon>Pterygota</taxon>
        <taxon>Neoptera</taxon>
        <taxon>Endopterygota</taxon>
        <taxon>Diptera</taxon>
        <taxon>Brachycera</taxon>
        <taxon>Muscomorpha</taxon>
        <taxon>Ephydroidea</taxon>
        <taxon>Drosophilidae</taxon>
        <taxon>Drosophila</taxon>
        <taxon>Sophophora</taxon>
    </lineage>
</organism>
<comment type="function">
    <text evidence="1">Probable gustatory receptor which mediates acceptance or avoidance behavior, depending on its substrates.</text>
</comment>
<comment type="subcellular location">
    <subcellularLocation>
        <location evidence="1">Cell membrane</location>
        <topology evidence="1">Multi-pass membrane protein</topology>
    </subcellularLocation>
</comment>
<comment type="similarity">
    <text evidence="4">Belongs to the insect chemoreceptor superfamily. Gustatory receptor (GR) family. Gr2a subfamily.</text>
</comment>
<feature type="chain" id="PRO_0000216546" description="Putative gustatory receptor 98a">
    <location>
        <begin position="1"/>
        <end position="391"/>
    </location>
</feature>
<feature type="topological domain" description="Cytoplasmic" evidence="1">
    <location>
        <begin position="1"/>
        <end position="31"/>
    </location>
</feature>
<feature type="transmembrane region" description="Helical; Name=1" evidence="2">
    <location>
        <begin position="32"/>
        <end position="52"/>
    </location>
</feature>
<feature type="topological domain" description="Extracellular" evidence="1">
    <location>
        <begin position="53"/>
        <end position="74"/>
    </location>
</feature>
<feature type="transmembrane region" description="Helical; Name=2" evidence="2">
    <location>
        <begin position="75"/>
        <end position="95"/>
    </location>
</feature>
<feature type="topological domain" description="Cytoplasmic" evidence="1">
    <location>
        <begin position="96"/>
        <end position="128"/>
    </location>
</feature>
<feature type="transmembrane region" description="Helical; Name=3" evidence="2">
    <location>
        <begin position="129"/>
        <end position="149"/>
    </location>
</feature>
<feature type="topological domain" description="Extracellular" evidence="1">
    <location>
        <begin position="150"/>
        <end position="173"/>
    </location>
</feature>
<feature type="transmembrane region" description="Helical; Name=4" evidence="2">
    <location>
        <begin position="174"/>
        <end position="194"/>
    </location>
</feature>
<feature type="topological domain" description="Cytoplasmic" evidence="1">
    <location>
        <begin position="195"/>
        <end position="239"/>
    </location>
</feature>
<feature type="transmembrane region" description="Helical; Name=5" evidence="2">
    <location>
        <begin position="240"/>
        <end position="260"/>
    </location>
</feature>
<feature type="topological domain" description="Extracellular" evidence="1">
    <location>
        <begin position="261"/>
        <end position="272"/>
    </location>
</feature>
<feature type="transmembrane region" description="Helical; Name=6" evidence="2">
    <location>
        <begin position="273"/>
        <end position="293"/>
    </location>
</feature>
<feature type="topological domain" description="Cytoplasmic" evidence="1">
    <location>
        <begin position="294"/>
        <end position="347"/>
    </location>
</feature>
<feature type="transmembrane region" description="Helical; Name=7" evidence="2">
    <location>
        <begin position="348"/>
        <end position="368"/>
    </location>
</feature>
<feature type="topological domain" description="Extracellular" evidence="1">
    <location>
        <begin position="369"/>
        <end position="391"/>
    </location>
</feature>
<feature type="glycosylation site" description="N-linked (GlcNAc...) asparagine" evidence="2">
    <location>
        <position position="157"/>
    </location>
</feature>
<feature type="glycosylation site" description="N-linked (GlcNAc...) asparagine" evidence="2">
    <location>
        <position position="383"/>
    </location>
</feature>